<organism>
    <name type="scientific">Feline calicivirus</name>
    <name type="common">FCV</name>
    <dbReference type="NCBI Taxonomy" id="11978"/>
    <lineage>
        <taxon>Viruses</taxon>
        <taxon>Riboviria</taxon>
        <taxon>Orthornavirae</taxon>
        <taxon>Pisuviricota</taxon>
        <taxon>Pisoniviricetes</taxon>
        <taxon>Picornavirales</taxon>
        <taxon>Caliciviridae</taxon>
        <taxon>Vesivirus</taxon>
    </lineage>
</organism>
<name>POLG_FCV</name>
<accession>N0A3C0</accession>
<protein>
    <recommendedName>
        <fullName>Genome polyprotein</fullName>
    </recommendedName>
    <component>
        <recommendedName>
            <fullName>Protein p5.6</fullName>
        </recommendedName>
        <alternativeName>
            <fullName>NS1</fullName>
        </alternativeName>
    </component>
    <component>
        <recommendedName>
            <fullName>Protein p32</fullName>
        </recommendedName>
        <alternativeName>
            <fullName>NS2</fullName>
        </alternativeName>
    </component>
    <component>
        <recommendedName>
            <fullName>NTPase</fullName>
            <ecNumber>3.6.1.15</ecNumber>
        </recommendedName>
        <alternativeName>
            <fullName>NS3</fullName>
        </alternativeName>
        <alternativeName>
            <fullName>p39</fullName>
        </alternativeName>
    </component>
    <component>
        <recommendedName>
            <fullName>Protein p30</fullName>
        </recommendedName>
        <alternativeName>
            <fullName>NS4</fullName>
        </alternativeName>
    </component>
    <component>
        <recommendedName>
            <fullName>Viral genome-linked protein</fullName>
        </recommendedName>
        <alternativeName>
            <fullName>NS5</fullName>
        </alternativeName>
        <alternativeName>
            <fullName>VPg</fullName>
        </alternativeName>
        <alternativeName>
            <fullName>p13</fullName>
        </alternativeName>
    </component>
    <component>
        <recommendedName>
            <fullName>Protease-polymerase p76</fullName>
            <shortName>Pro-Pol</shortName>
            <ecNumber>2.7.7.48</ecNumber>
            <ecNumber>3.4.22.66</ecNumber>
        </recommendedName>
        <alternativeName>
            <fullName>NS6-7</fullName>
        </alternativeName>
    </component>
</protein>
<dbReference type="EC" id="3.6.1.15"/>
<dbReference type="EC" id="2.7.7.48"/>
<dbReference type="EC" id="3.4.22.66"/>
<dbReference type="EMBL" id="KC835209">
    <property type="protein sequence ID" value="AGK45474.1"/>
    <property type="molecule type" value="Genomic_RNA"/>
</dbReference>
<dbReference type="SMR" id="N0A3C0"/>
<dbReference type="Proteomes" id="UP000109350">
    <property type="component" value="Genome"/>
</dbReference>
<dbReference type="GO" id="GO:0005524">
    <property type="term" value="F:ATP binding"/>
    <property type="evidence" value="ECO:0007669"/>
    <property type="project" value="UniProtKB-KW"/>
</dbReference>
<dbReference type="GO" id="GO:0016887">
    <property type="term" value="F:ATP hydrolysis activity"/>
    <property type="evidence" value="ECO:0007669"/>
    <property type="project" value="InterPro"/>
</dbReference>
<dbReference type="GO" id="GO:0004197">
    <property type="term" value="F:cysteine-type endopeptidase activity"/>
    <property type="evidence" value="ECO:0007669"/>
    <property type="project" value="InterPro"/>
</dbReference>
<dbReference type="GO" id="GO:0003723">
    <property type="term" value="F:RNA binding"/>
    <property type="evidence" value="ECO:0007669"/>
    <property type="project" value="InterPro"/>
</dbReference>
<dbReference type="GO" id="GO:0003724">
    <property type="term" value="F:RNA helicase activity"/>
    <property type="evidence" value="ECO:0007669"/>
    <property type="project" value="InterPro"/>
</dbReference>
<dbReference type="GO" id="GO:0003968">
    <property type="term" value="F:RNA-directed RNA polymerase activity"/>
    <property type="evidence" value="ECO:0007669"/>
    <property type="project" value="UniProtKB-KW"/>
</dbReference>
<dbReference type="GO" id="GO:0006351">
    <property type="term" value="P:DNA-templated transcription"/>
    <property type="evidence" value="ECO:0007669"/>
    <property type="project" value="InterPro"/>
</dbReference>
<dbReference type="GO" id="GO:0006508">
    <property type="term" value="P:proteolysis"/>
    <property type="evidence" value="ECO:0007669"/>
    <property type="project" value="UniProtKB-KW"/>
</dbReference>
<dbReference type="GO" id="GO:0039694">
    <property type="term" value="P:viral RNA genome replication"/>
    <property type="evidence" value="ECO:0007669"/>
    <property type="project" value="InterPro"/>
</dbReference>
<dbReference type="CDD" id="cd00009">
    <property type="entry name" value="AAA"/>
    <property type="match status" value="1"/>
</dbReference>
<dbReference type="CDD" id="cd23192">
    <property type="entry name" value="Caliciviridae_RdRp"/>
    <property type="match status" value="1"/>
</dbReference>
<dbReference type="Gene3D" id="1.10.260.110">
    <property type="match status" value="1"/>
</dbReference>
<dbReference type="Gene3D" id="1.20.960.20">
    <property type="match status" value="1"/>
</dbReference>
<dbReference type="Gene3D" id="3.30.70.270">
    <property type="match status" value="2"/>
</dbReference>
<dbReference type="Gene3D" id="6.10.250.3230">
    <property type="match status" value="1"/>
</dbReference>
<dbReference type="Gene3D" id="3.40.50.300">
    <property type="entry name" value="P-loop containing nucleotide triphosphate hydrolases"/>
    <property type="match status" value="1"/>
</dbReference>
<dbReference type="InterPro" id="IPR003593">
    <property type="entry name" value="AAA+_ATPase"/>
</dbReference>
<dbReference type="InterPro" id="IPR043502">
    <property type="entry name" value="DNA/RNA_pol_sf"/>
</dbReference>
<dbReference type="InterPro" id="IPR004004">
    <property type="entry name" value="Helic/Pol/Pept_Calicivir-typ"/>
</dbReference>
<dbReference type="InterPro" id="IPR000605">
    <property type="entry name" value="Helicase_SF3_ssDNA/RNA_vir"/>
</dbReference>
<dbReference type="InterPro" id="IPR014759">
    <property type="entry name" value="Helicase_SF3_ssRNA_vir"/>
</dbReference>
<dbReference type="InterPro" id="IPR027417">
    <property type="entry name" value="P-loop_NTPase"/>
</dbReference>
<dbReference type="InterPro" id="IPR000317">
    <property type="entry name" value="Peptidase_C24"/>
</dbReference>
<dbReference type="InterPro" id="IPR009003">
    <property type="entry name" value="Peptidase_S1_PA"/>
</dbReference>
<dbReference type="InterPro" id="IPR043128">
    <property type="entry name" value="Rev_trsase/Diguanyl_cyclase"/>
</dbReference>
<dbReference type="InterPro" id="IPR001205">
    <property type="entry name" value="RNA-dir_pol_C"/>
</dbReference>
<dbReference type="InterPro" id="IPR007094">
    <property type="entry name" value="RNA-dir_pol_PSvirus"/>
</dbReference>
<dbReference type="InterPro" id="IPR049434">
    <property type="entry name" value="VPg"/>
</dbReference>
<dbReference type="Pfam" id="PF03510">
    <property type="entry name" value="Peptidase_C24"/>
    <property type="match status" value="1"/>
</dbReference>
<dbReference type="Pfam" id="PF00680">
    <property type="entry name" value="RdRP_1"/>
    <property type="match status" value="1"/>
</dbReference>
<dbReference type="Pfam" id="PF00910">
    <property type="entry name" value="RNA_helicase"/>
    <property type="match status" value="1"/>
</dbReference>
<dbReference type="Pfam" id="PF20915">
    <property type="entry name" value="VPg"/>
    <property type="match status" value="1"/>
</dbReference>
<dbReference type="PRINTS" id="PR00916">
    <property type="entry name" value="2CENDOPTASE"/>
</dbReference>
<dbReference type="PRINTS" id="PR00918">
    <property type="entry name" value="CALICVIRUSNS"/>
</dbReference>
<dbReference type="SMART" id="SM00382">
    <property type="entry name" value="AAA"/>
    <property type="match status" value="1"/>
</dbReference>
<dbReference type="SUPFAM" id="SSF56672">
    <property type="entry name" value="DNA/RNA polymerases"/>
    <property type="match status" value="1"/>
</dbReference>
<dbReference type="SUPFAM" id="SSF52540">
    <property type="entry name" value="P-loop containing nucleoside triphosphate hydrolases"/>
    <property type="match status" value="2"/>
</dbReference>
<dbReference type="SUPFAM" id="SSF50494">
    <property type="entry name" value="Trypsin-like serine proteases"/>
    <property type="match status" value="1"/>
</dbReference>
<dbReference type="PROSITE" id="PS51894">
    <property type="entry name" value="CV_3CL_PRO"/>
    <property type="match status" value="1"/>
</dbReference>
<dbReference type="PROSITE" id="PS50507">
    <property type="entry name" value="RDRP_SSRNA_POS"/>
    <property type="match status" value="1"/>
</dbReference>
<dbReference type="PROSITE" id="PS51218">
    <property type="entry name" value="SF3_HELICASE_2"/>
    <property type="match status" value="1"/>
</dbReference>
<reference key="1">
    <citation type="journal article" date="2013" name="Genome Announc.">
        <title>Complete genome sequence of the feline calicivirus 2280 strain from the american tissue culture collection.</title>
        <authorList>
            <person name="Oka T."/>
            <person name="Takagi H."/>
            <person name="Saif L.J."/>
            <person name="Wang Q."/>
        </authorList>
    </citation>
    <scope>NUCLEOTIDE SEQUENCE [GENOMIC RNA]</scope>
    <source>
        <strain>FCV-2280</strain>
    </source>
</reference>
<reference key="2">
    <citation type="journal article" date="2020" name="PLoS Pathog.">
        <title>Feline calicivirus strain 2280 p30 antagonizes type I interferon-mediated antiviral innate immunity through directly degrading IFNAR1 mRNA.</title>
        <authorList>
            <person name="Tian J."/>
            <person name="Kang H."/>
            <person name="Huang J."/>
            <person name="Li Z."/>
            <person name="Pan Y."/>
            <person name="Li Y."/>
            <person name="Chen S."/>
            <person name="Zhang J."/>
            <person name="Yin H."/>
            <person name="Qu L."/>
        </authorList>
    </citation>
    <scope>FUNCTION (PROTEIN P30)</scope>
    <source>
        <strain>FCV-2280</strain>
    </source>
</reference>
<reference key="3">
    <citation type="journal article" date="2021" name="J. Virol.">
        <title>Feline Calicivirus Proteinase-Polymerase Protein Degrades mRNAs To Inhibit Host Gene Expression.</title>
        <authorList>
            <person name="Wu H."/>
            <person name="Huang J."/>
            <person name="Liu Y."/>
            <person name="Pan Y."/>
            <person name="Li Y."/>
            <person name="Miao Q."/>
            <person name="Qu L."/>
            <person name="Tian J."/>
        </authorList>
    </citation>
    <scope>FUNCTION (PROTEASE-POLYMERASE P76)</scope>
    <source>
        <strain>FCV-2280</strain>
    </source>
</reference>
<feature type="chain" id="PRO_0000459184" description="Genome polyprotein">
    <location>
        <begin position="1"/>
        <end position="1763"/>
    </location>
</feature>
<feature type="chain" id="PRO_0000459185" description="Protein p5.6">
    <location>
        <begin position="1"/>
        <end position="46"/>
    </location>
</feature>
<feature type="chain" id="PRO_0000459186" description="Protein p32">
    <location>
        <begin position="47"/>
        <end position="331"/>
    </location>
</feature>
<feature type="chain" id="PRO_0000459187" description="NTPase">
    <location>
        <begin position="332"/>
        <end position="685"/>
    </location>
</feature>
<feature type="chain" id="PRO_0000459188" description="Protein p30">
    <location>
        <begin position="686"/>
        <end position="960"/>
    </location>
</feature>
<feature type="chain" id="PRO_0000459189" description="Viral genome-linked protein">
    <location>
        <begin position="961"/>
        <end position="1071"/>
    </location>
</feature>
<feature type="chain" id="PRO_0000459190" description="Protease-polymerase p76">
    <location>
        <begin position="1072"/>
        <end position="1763"/>
    </location>
</feature>
<feature type="domain" description="SF3 helicase" evidence="5">
    <location>
        <begin position="458"/>
        <end position="614"/>
    </location>
</feature>
<feature type="domain" description="Peptidase C24" evidence="6">
    <location>
        <begin position="1073"/>
        <end position="1229"/>
    </location>
</feature>
<feature type="domain" description="RdRp catalytic" evidence="4">
    <location>
        <begin position="1478"/>
        <end position="1603"/>
    </location>
</feature>
<feature type="active site" description="For 3CLpro activity" evidence="1 6">
    <location>
        <position position="1110"/>
    </location>
</feature>
<feature type="active site" description="For 3CLpro activity" evidence="1 6">
    <location>
        <position position="1131"/>
    </location>
</feature>
<feature type="active site" description="For 3CLpro activity" evidence="1 6">
    <location>
        <position position="1193"/>
    </location>
</feature>
<feature type="binding site" evidence="5">
    <location>
        <begin position="484"/>
        <end position="491"/>
    </location>
    <ligand>
        <name>ATP</name>
        <dbReference type="ChEBI" id="CHEBI:30616"/>
    </ligand>
</feature>
<feature type="site" description="Cleavage; by Pro-Pol" evidence="3">
    <location>
        <begin position="46"/>
        <end position="47"/>
    </location>
</feature>
<feature type="site" description="Cleavage; by Pro-Pol" evidence="3">
    <location>
        <begin position="331"/>
        <end position="332"/>
    </location>
</feature>
<feature type="site" description="Cleavage; by Pro-Pol" evidence="3">
    <location>
        <begin position="685"/>
        <end position="686"/>
    </location>
</feature>
<feature type="site" description="Cleavage; by Pro-Pol" evidence="3">
    <location>
        <begin position="960"/>
        <end position="961"/>
    </location>
</feature>
<feature type="site" description="Cleavage; by Pro-Pol" evidence="3">
    <location>
        <begin position="1071"/>
        <end position="1072"/>
    </location>
</feature>
<feature type="modified residue" description="O-(5'-phospho-RNA)-tyrosine" evidence="2">
    <location>
        <position position="984"/>
    </location>
</feature>
<comment type="function">
    <molecule>NTPase</molecule>
    <text>NTPase presumably plays a role in replication. Despite having similarities with helicases, does not seem to display any helicase activity.</text>
</comment>
<comment type="function">
    <molecule>Viral genome-linked protein</molecule>
    <text evidence="3">Viral genome-linked protein is covalently linked to the 5'-end of the positive-strand, negative-strand genomic RNAs and subgenomic RNA. Acts as a genome-linked replication primer. May recruit ribosome to viral RNA thereby promoting viral proteins translation.</text>
</comment>
<comment type="function">
    <molecule>Protease-polymerase p76</molecule>
    <text evidence="3 8">The protease activity processes the polyprotein: Pro-Pol is first released by autocleavage, then all other proteins are cleaved (By similarity). Cleaves host translation initiation factor eIF4G1, eIF4G2 and PABP1 thereby inducing a shutdown of host protein synthesis (By similarity). This shutdown may not prevent viral mRNA from being translated since viral Vpg replaces the cap (By similarity). May cleave host polyadenylate-binding protein thereby inhibiting cellular translation (By similarity). Seems to act as a RNase and degrades host Pol II-driven mRNAs with the help of host XRN1 (PubMed:33853967). Inhibits the integrated stress response (ISR) in the infected cell by cleaving host G3BP1 and G3BP2 (By similarity). Stress granule formation is thus inhibited, which allows protein synthesis and viral replication (By similarity). The RNA-directed RNA polymerase activity replicates genomic and antigenomic viral RNA by recognizing specific signals. Also transcribes a subgenomic mRNA by initiating RNA synthesis internally on antigenomic RNA. This sgRNA codes for structural proteins. Catalyzes the covalent attachment VPg with viral RNAs.</text>
</comment>
<comment type="function">
    <molecule>Protein p30</molecule>
    <text evidence="7">Selectively decays the mRNA of host interferon receptor IFNAR1.</text>
</comment>
<comment type="catalytic activity">
    <molecule>NTPase</molecule>
    <reaction>
        <text>a ribonucleoside 5'-triphosphate + H2O = a ribonucleoside 5'-diphosphate + phosphate + H(+)</text>
        <dbReference type="Rhea" id="RHEA:23680"/>
        <dbReference type="ChEBI" id="CHEBI:15377"/>
        <dbReference type="ChEBI" id="CHEBI:15378"/>
        <dbReference type="ChEBI" id="CHEBI:43474"/>
        <dbReference type="ChEBI" id="CHEBI:57930"/>
        <dbReference type="ChEBI" id="CHEBI:61557"/>
        <dbReference type="EC" id="3.6.1.15"/>
    </reaction>
</comment>
<comment type="catalytic activity">
    <molecule>Protease-polymerase p76</molecule>
    <reaction evidence="4">
        <text>RNA(n) + a ribonucleoside 5'-triphosphate = RNA(n+1) + diphosphate</text>
        <dbReference type="Rhea" id="RHEA:21248"/>
        <dbReference type="Rhea" id="RHEA-COMP:14527"/>
        <dbReference type="Rhea" id="RHEA-COMP:17342"/>
        <dbReference type="ChEBI" id="CHEBI:33019"/>
        <dbReference type="ChEBI" id="CHEBI:61557"/>
        <dbReference type="ChEBI" id="CHEBI:140395"/>
        <dbReference type="EC" id="2.7.7.48"/>
    </reaction>
</comment>
<comment type="catalytic activity">
    <molecule>Protease-polymerase p76</molecule>
    <reaction evidence="6">
        <text>Endopeptidase with a preference for cleavage when the P1 position is occupied by Glu-|-Xaa and the P1' position is occupied by Gly-|-Yaa.</text>
        <dbReference type="EC" id="3.4.22.66"/>
    </reaction>
</comment>
<comment type="subunit">
    <text evidence="3">Protein p32: Homodimer (By similarity). Interacts with NTPase, protein p30 and protease-polymerase p76 (By similarity).</text>
</comment>
<comment type="subunit">
    <molecule>Viral genome-linked protein</molecule>
    <text evidence="3">Interacts with capsid protein VP1 and protease-polymerase p76.</text>
</comment>
<comment type="subunit">
    <molecule>Protease-polymerase p76</molecule>
    <text evidence="3">Homooligomer. Interacts with Vpg, protein p32 and may interact with capsid protein VP1.</text>
</comment>
<comment type="domain">
    <molecule>Protease-polymerase p76</molecule>
    <text>Protease-polymerase is composed of two domains displaying two different catalytic activity. These activities may act independently.</text>
</comment>
<comment type="PTM">
    <molecule>Genome polyprotein</molecule>
    <text evidence="3">Specific enzymatic cleavages in vivo yield mature proteins. Pro-Pol is first autocatalytically cleaved, then processes the whole polyprotein.</text>
</comment>
<comment type="PTM">
    <molecule>Viral genome-linked protein</molecule>
    <text>VPg is uridylylated by the polymerase and is covalently attached to the 5'-end of the polyadenylated genomic and subgenomic RNAs. This uridylylated form acts as a nucleotide-peptide primer for the polymerase.</text>
</comment>
<sequence>MSQTLSFVLKTHSVRKDFVHSVKRTLARRRDLQYLNNKLSRSMRAEACPSCASYDVCPNCTSGDIPDDGSSTMTIPSWEEITKTSTYSLLLSEDTSDELCPDDLVNVAAHIRKALSTQSHPANVEMCKEQLTSLLVMAEAMLPQRSRSMIPLHQQHQTARLEWREKFFSKPIDFLLERIGVSKDILQITAIWKIILEKACYCKSYGEEWFNIAKQKLREIKCFEGNTLKPLVGAFIDGLRLMTVDNPNPMAFLPKLIGLIKPLNLAMIIDNHENTTSGWIITLTAIMELYGITECTIDIITSLITTFYDKLAKATKFYSQVKALFMGFRSEDVANSFWYMAAAILCYLITGLIPNNGKFSKIKACLSGATTLVSGIIATQKLAAMFATWNSESIVNELSARTVAISELNNPTTTSDTDSVERLLELAKILHEEIKVHTLNPIMQSYNPILRNLMSTLDGVITSCNKRKAIARKRQVPVCYILTGPPGCGKTTAAQALAKKLSDQEPSVINLDVDHHDTYTGNEVCIIDEFDSSDKVDYANFVIGMVNSAPMVLNCDMLENKGKLFTSKYIIMTSNSETPVKPSSKRAGAFYRRVTIIDVTNPLVESHKRARPGTSVPRSCYKKNFSHLSLAKRGAECWCKEYVLDPKGLQHQTIKAPPPTFLNIDSLAQTMKQDFTLKNMAFEAEEGCSDHRYGFVCQQSEVETVRRLLNAIRVRLNATFTVCVGPEASNSVGCTAHVLTPDEPFNGKKFVVSRCNEASLSALEGNCVQSALGVCMSNKDLVHLCHFIRGKIVNDSVRLDELPANQHVVTVNSVFDLAWALRRHLSLTGQFQAIRAAYDVLTVPDKIPAMLRHWMDQTSFSDEHVVTQFVTPGGIVILESCGGARIWALGHNVIRAGGVTATPTGGCVRLMGLSAQTMPWCEIFRELFSLLAKIWSSVKVSTLVLTALGMYASRFRPKSEAKGKTKSKIGPYRGRGVALTDDEYDEWKEHNASRKLDLSVEDFLMLRHRAALGADDADAVKFRSWWNSRSKLADDYEDVTVIGKGGVKHERIRTSTLKAVDRGYDVSFAEESGPGTKFHKNAIGSVTDVCGEHKGYCVHMGHGVYASVAHVVKGDSFFLGERIFDLKTNGEFCCFRSTKILPSAAPFFSGKPTRDPWGSPVATEWKAKAYTTTSGKIVGCFATTSTETHPGDCGLPYIDDNGRVTGLHTGSGGPKTPSAKLVVPYVHIDMRTKAVTAQKYDVTKPDISYKGLICKQLDEIRIIPKGTRLHVSPAHTEDYEECSHQPASLGSGDPRCPKSLTAIVVDSLKPYCEKVEGPPHDILHRVQKMLIDHLSGFVPMNISSETSMLSAFHKLNHDTSCGPYLGGRKKDHMTNGEPDKTLLDLLSSKWKLATQGISLPHEYTIGLKDELRPVEKVAEGKRRMIWGCDVGVATVCAAAFKAVSDAITANHQYGPVQVGINMDSPSVEALYQRIKSAAKVYAVDYSKWDSTQSPRVSAASIDILRYFSDRSPIVDSAANTLKSPPVAIFNGVAVKVTSGLPSGMPLTSVINSLNHCLYVGCAIMQSLEARNIPVTWNLFSSFDVMTYGDDGVYMFPTMFASISDQIFGNLSAYGLKPTRVDKSIGAIEPIDPDSVVFLKRTITRTPQGIRGLLDRSSIIRQFYYIKGENSDDWKTPPKTIDPTSRGQQLWNACLYASQHGSEFYNKVYRLAVRAVEYEELHFEPPTYSSALEHYNSQFNGVEARSDQINMSDGTALHCDVFEV</sequence>
<evidence type="ECO:0000250" key="1">
    <source>
        <dbReference type="UniProtKB" id="P27408"/>
    </source>
</evidence>
<evidence type="ECO:0000250" key="2">
    <source>
        <dbReference type="UniProtKB" id="P27409"/>
    </source>
</evidence>
<evidence type="ECO:0000250" key="3">
    <source>
        <dbReference type="UniProtKB" id="Q66914"/>
    </source>
</evidence>
<evidence type="ECO:0000255" key="4">
    <source>
        <dbReference type="PROSITE-ProRule" id="PRU00539"/>
    </source>
</evidence>
<evidence type="ECO:0000255" key="5">
    <source>
        <dbReference type="PROSITE-ProRule" id="PRU00551"/>
    </source>
</evidence>
<evidence type="ECO:0000255" key="6">
    <source>
        <dbReference type="PROSITE-ProRule" id="PRU01242"/>
    </source>
</evidence>
<evidence type="ECO:0000269" key="7">
    <source>
    </source>
</evidence>
<evidence type="ECO:0000269" key="8">
    <source>
    </source>
</evidence>
<keyword id="KW-0067">ATP-binding</keyword>
<keyword id="KW-0191">Covalent protein-RNA linkage</keyword>
<keyword id="KW-0378">Hydrolase</keyword>
<keyword id="KW-0547">Nucleotide-binding</keyword>
<keyword id="KW-0548">Nucleotidyltransferase</keyword>
<keyword id="KW-0597">Phosphoprotein</keyword>
<keyword id="KW-0645">Protease</keyword>
<keyword id="KW-0696">RNA-directed RNA polymerase</keyword>
<keyword id="KW-0788">Thiol protease</keyword>
<keyword id="KW-0808">Transferase</keyword>
<keyword id="KW-0693">Viral RNA replication</keyword>
<proteinExistence type="inferred from homology"/>